<reference key="1">
    <citation type="journal article" date="1998" name="Genes Dev.">
        <title>Pleiotropic control of glucose and hormone responses by PRL1, a nuclear WD protein, in Arabidopsis.</title>
        <authorList>
            <person name="Nemeth K."/>
            <person name="Salchert K."/>
            <person name="Putnoky P."/>
            <person name="Bhalerao R."/>
            <person name="Koncz-Kalman Z."/>
            <person name="Stankovic-Stangeland B."/>
            <person name="Bako L."/>
            <person name="Mathur J."/>
            <person name="Oekresz L."/>
            <person name="Stabel S."/>
            <person name="Geigenberger P."/>
            <person name="Stitt M."/>
            <person name="Redei G.P."/>
            <person name="Schell J."/>
            <person name="Koncz C."/>
        </authorList>
    </citation>
    <scope>NUCLEOTIDE SEQUENCE [MRNA]</scope>
    <source>
        <strain>cv. Columbia</strain>
    </source>
</reference>
<reference key="2">
    <citation type="journal article" date="2000" name="DNA Res.">
        <title>Structural analysis of Arabidopsis thaliana chromosome 3. I. Sequence features of the regions of 4,504,864 bp covered by sixty P1 and TAC clones.</title>
        <authorList>
            <person name="Sato S."/>
            <person name="Nakamura Y."/>
            <person name="Kaneko T."/>
            <person name="Katoh T."/>
            <person name="Asamizu E."/>
            <person name="Tabata S."/>
        </authorList>
    </citation>
    <scope>NUCLEOTIDE SEQUENCE [LARGE SCALE GENOMIC DNA]</scope>
    <source>
        <strain>cv. Columbia</strain>
    </source>
</reference>
<reference key="3">
    <citation type="journal article" date="2017" name="Plant J.">
        <title>Araport11: a complete reannotation of the Arabidopsis thaliana reference genome.</title>
        <authorList>
            <person name="Cheng C.Y."/>
            <person name="Krishnakumar V."/>
            <person name="Chan A.P."/>
            <person name="Thibaud-Nissen F."/>
            <person name="Schobel S."/>
            <person name="Town C.D."/>
        </authorList>
    </citation>
    <scope>GENOME REANNOTATION</scope>
    <source>
        <strain>cv. Columbia</strain>
    </source>
</reference>
<reference key="4">
    <citation type="journal article" date="2003" name="Science">
        <title>Empirical analysis of transcriptional activity in the Arabidopsis genome.</title>
        <authorList>
            <person name="Yamada K."/>
            <person name="Lim J."/>
            <person name="Dale J.M."/>
            <person name="Chen H."/>
            <person name="Shinn P."/>
            <person name="Palm C.J."/>
            <person name="Southwick A.M."/>
            <person name="Wu H.C."/>
            <person name="Kim C.J."/>
            <person name="Nguyen M."/>
            <person name="Pham P.K."/>
            <person name="Cheuk R.F."/>
            <person name="Karlin-Newmann G."/>
            <person name="Liu S.X."/>
            <person name="Lam B."/>
            <person name="Sakano H."/>
            <person name="Wu T."/>
            <person name="Yu G."/>
            <person name="Miranda M."/>
            <person name="Quach H.L."/>
            <person name="Tripp M."/>
            <person name="Chang C.H."/>
            <person name="Lee J.M."/>
            <person name="Toriumi M.J."/>
            <person name="Chan M.M."/>
            <person name="Tang C.C."/>
            <person name="Onodera C.S."/>
            <person name="Deng J.M."/>
            <person name="Akiyama K."/>
            <person name="Ansari Y."/>
            <person name="Arakawa T."/>
            <person name="Banh J."/>
            <person name="Banno F."/>
            <person name="Bowser L."/>
            <person name="Brooks S.Y."/>
            <person name="Carninci P."/>
            <person name="Chao Q."/>
            <person name="Choy N."/>
            <person name="Enju A."/>
            <person name="Goldsmith A.D."/>
            <person name="Gurjal M."/>
            <person name="Hansen N.F."/>
            <person name="Hayashizaki Y."/>
            <person name="Johnson-Hopson C."/>
            <person name="Hsuan V.W."/>
            <person name="Iida K."/>
            <person name="Karnes M."/>
            <person name="Khan S."/>
            <person name="Koesema E."/>
            <person name="Ishida J."/>
            <person name="Jiang P.X."/>
            <person name="Jones T."/>
            <person name="Kawai J."/>
            <person name="Kamiya A."/>
            <person name="Meyers C."/>
            <person name="Nakajima M."/>
            <person name="Narusaka M."/>
            <person name="Seki M."/>
            <person name="Sakurai T."/>
            <person name="Satou M."/>
            <person name="Tamse R."/>
            <person name="Vaysberg M."/>
            <person name="Wallender E.K."/>
            <person name="Wong C."/>
            <person name="Yamamura Y."/>
            <person name="Yuan S."/>
            <person name="Shinozaki K."/>
            <person name="Davis R.W."/>
            <person name="Theologis A."/>
            <person name="Ecker J.R."/>
        </authorList>
    </citation>
    <scope>NUCLEOTIDE SEQUENCE [LARGE SCALE MRNA]</scope>
    <source>
        <strain>cv. Columbia</strain>
    </source>
</reference>
<reference key="5">
    <citation type="submission" date="2004-12" db="EMBL/GenBank/DDBJ databases">
        <title>Arabidopsis ORF clones.</title>
        <authorList>
            <person name="Cheuk R.F."/>
            <person name="Chen H."/>
            <person name="Kim C.J."/>
            <person name="Shinn P."/>
            <person name="Ecker J.R."/>
        </authorList>
    </citation>
    <scope>NUCLEOTIDE SEQUENCE [LARGE SCALE MRNA]</scope>
    <source>
        <strain>cv. Columbia</strain>
    </source>
</reference>
<reference key="6">
    <citation type="journal article" date="2008" name="Plant Cell">
        <title>Characterization of Arabidopsis and rice DWD proteins and their roles as substrate receptors for CUL4-RING E3 ubiquitin ligases.</title>
        <authorList>
            <person name="Lee J.H."/>
            <person name="Terzaghi W."/>
            <person name="Gusmaroli G."/>
            <person name="Charron J.B."/>
            <person name="Yoon H.J."/>
            <person name="Chen H."/>
            <person name="He Y.J."/>
            <person name="Xiong Y."/>
            <person name="Deng X.W."/>
        </authorList>
    </citation>
    <scope>DWD MOTIF</scope>
</reference>
<protein>
    <recommendedName>
        <fullName>Protein pleiotropic regulator PRL2</fullName>
    </recommendedName>
</protein>
<gene>
    <name type="primary">PRL2</name>
    <name type="ordered locus">At3g16650</name>
    <name type="ORF">MGL6.11</name>
</gene>
<proteinExistence type="evidence at transcript level"/>
<dbReference type="EMBL" id="X82826">
    <property type="protein sequence ID" value="CAA58033.1"/>
    <property type="molecule type" value="mRNA"/>
</dbReference>
<dbReference type="EMBL" id="AB022217">
    <property type="protein sequence ID" value="BAB02756.1"/>
    <property type="status" value="ALT_SEQ"/>
    <property type="molecule type" value="Genomic_DNA"/>
</dbReference>
<dbReference type="EMBL" id="CP002686">
    <property type="protein sequence ID" value="AEE75848.1"/>
    <property type="molecule type" value="Genomic_DNA"/>
</dbReference>
<dbReference type="EMBL" id="AY054181">
    <property type="protein sequence ID" value="AAL06842.1"/>
    <property type="status" value="ALT_INIT"/>
    <property type="molecule type" value="mRNA"/>
</dbReference>
<dbReference type="EMBL" id="BT020378">
    <property type="protein sequence ID" value="AAV85733.1"/>
    <property type="molecule type" value="mRNA"/>
</dbReference>
<dbReference type="RefSeq" id="NP_566557.1">
    <property type="nucleotide sequence ID" value="NM_112538.5"/>
</dbReference>
<dbReference type="SMR" id="Q39190"/>
<dbReference type="BioGRID" id="6251">
    <property type="interactions" value="2"/>
</dbReference>
<dbReference type="FunCoup" id="Q39190">
    <property type="interactions" value="3608"/>
</dbReference>
<dbReference type="IntAct" id="Q39190">
    <property type="interactions" value="1"/>
</dbReference>
<dbReference type="STRING" id="3702.Q39190"/>
<dbReference type="GlyGen" id="Q39190">
    <property type="glycosylation" value="1 site"/>
</dbReference>
<dbReference type="iPTMnet" id="Q39190"/>
<dbReference type="PaxDb" id="3702-AT3G16650.1"/>
<dbReference type="ProteomicsDB" id="226500"/>
<dbReference type="EnsemblPlants" id="AT3G16650.1">
    <property type="protein sequence ID" value="AT3G16650.1"/>
    <property type="gene ID" value="AT3G16650"/>
</dbReference>
<dbReference type="GeneID" id="820917"/>
<dbReference type="Gramene" id="AT3G16650.1">
    <property type="protein sequence ID" value="AT3G16650.1"/>
    <property type="gene ID" value="AT3G16650"/>
</dbReference>
<dbReference type="KEGG" id="ath:AT3G16650"/>
<dbReference type="Araport" id="AT3G16650"/>
<dbReference type="TAIR" id="AT3G16650">
    <property type="gene designation" value="PRL2"/>
</dbReference>
<dbReference type="eggNOG" id="KOG0285">
    <property type="taxonomic scope" value="Eukaryota"/>
</dbReference>
<dbReference type="HOGENOM" id="CLU_000288_72_2_1"/>
<dbReference type="InParanoid" id="Q39190"/>
<dbReference type="OMA" id="ERMPSRW"/>
<dbReference type="OrthoDB" id="10256122at2759"/>
<dbReference type="PhylomeDB" id="Q39190"/>
<dbReference type="PRO" id="PR:Q39190"/>
<dbReference type="Proteomes" id="UP000006548">
    <property type="component" value="Chromosome 3"/>
</dbReference>
<dbReference type="ExpressionAtlas" id="Q39190">
    <property type="expression patterns" value="baseline and differential"/>
</dbReference>
<dbReference type="GO" id="GO:0080008">
    <property type="term" value="C:Cul4-RING E3 ubiquitin ligase complex"/>
    <property type="evidence" value="ECO:0000250"/>
    <property type="project" value="TAIR"/>
</dbReference>
<dbReference type="GO" id="GO:0000398">
    <property type="term" value="P:mRNA splicing, via spliceosome"/>
    <property type="evidence" value="ECO:0007669"/>
    <property type="project" value="InterPro"/>
</dbReference>
<dbReference type="CDD" id="cd00200">
    <property type="entry name" value="WD40"/>
    <property type="match status" value="1"/>
</dbReference>
<dbReference type="FunFam" id="2.130.10.10:FF:000012">
    <property type="entry name" value="Putative pleiotropic regulator 1"/>
    <property type="match status" value="1"/>
</dbReference>
<dbReference type="Gene3D" id="2.130.10.10">
    <property type="entry name" value="YVTN repeat-like/Quinoprotein amine dehydrogenase"/>
    <property type="match status" value="1"/>
</dbReference>
<dbReference type="InterPro" id="IPR020472">
    <property type="entry name" value="G-protein_beta_WD-40_rep"/>
</dbReference>
<dbReference type="InterPro" id="IPR045241">
    <property type="entry name" value="Prp46/PLRG1-like"/>
</dbReference>
<dbReference type="InterPro" id="IPR015943">
    <property type="entry name" value="WD40/YVTN_repeat-like_dom_sf"/>
</dbReference>
<dbReference type="InterPro" id="IPR019775">
    <property type="entry name" value="WD40_repeat_CS"/>
</dbReference>
<dbReference type="InterPro" id="IPR036322">
    <property type="entry name" value="WD40_repeat_dom_sf"/>
</dbReference>
<dbReference type="InterPro" id="IPR001680">
    <property type="entry name" value="WD40_rpt"/>
</dbReference>
<dbReference type="PANTHER" id="PTHR19923:SF0">
    <property type="entry name" value="PLEIOTROPIC REGULATOR 1"/>
    <property type="match status" value="1"/>
</dbReference>
<dbReference type="PANTHER" id="PTHR19923">
    <property type="entry name" value="WD40 REPEAT PROTEINPRL1/PRL2-RELATED"/>
    <property type="match status" value="1"/>
</dbReference>
<dbReference type="Pfam" id="PF00400">
    <property type="entry name" value="WD40"/>
    <property type="match status" value="6"/>
</dbReference>
<dbReference type="PRINTS" id="PR00320">
    <property type="entry name" value="GPROTEINBRPT"/>
</dbReference>
<dbReference type="SMART" id="SM00320">
    <property type="entry name" value="WD40"/>
    <property type="match status" value="7"/>
</dbReference>
<dbReference type="SUPFAM" id="SSF50978">
    <property type="entry name" value="WD40 repeat-like"/>
    <property type="match status" value="1"/>
</dbReference>
<dbReference type="PROSITE" id="PS00678">
    <property type="entry name" value="WD_REPEATS_1"/>
    <property type="match status" value="2"/>
</dbReference>
<dbReference type="PROSITE" id="PS50082">
    <property type="entry name" value="WD_REPEATS_2"/>
    <property type="match status" value="4"/>
</dbReference>
<dbReference type="PROSITE" id="PS50294">
    <property type="entry name" value="WD_REPEATS_REGION"/>
    <property type="match status" value="1"/>
</dbReference>
<organism>
    <name type="scientific">Arabidopsis thaliana</name>
    <name type="common">Mouse-ear cress</name>
    <dbReference type="NCBI Taxonomy" id="3702"/>
    <lineage>
        <taxon>Eukaryota</taxon>
        <taxon>Viridiplantae</taxon>
        <taxon>Streptophyta</taxon>
        <taxon>Embryophyta</taxon>
        <taxon>Tracheophyta</taxon>
        <taxon>Spermatophyta</taxon>
        <taxon>Magnoliopsida</taxon>
        <taxon>eudicotyledons</taxon>
        <taxon>Gunneridae</taxon>
        <taxon>Pentapetalae</taxon>
        <taxon>rosids</taxon>
        <taxon>malvids</taxon>
        <taxon>Brassicales</taxon>
        <taxon>Brassicaceae</taxon>
        <taxon>Camelineae</taxon>
        <taxon>Arabidopsis</taxon>
    </lineage>
</organism>
<comment type="function">
    <text evidence="1">Pleiotropic regulator.</text>
</comment>
<comment type="domain">
    <text evidence="1">The DWD box is required for interaction with DDB1A.</text>
</comment>
<comment type="similarity">
    <text evidence="3">Belongs to the WD repeat PRL1/PRL2 family.</text>
</comment>
<comment type="caution">
    <text evidence="3">It is uncertain whether Met-1 or Met-3 is the initiator.</text>
</comment>
<comment type="sequence caution" evidence="3">
    <conflict type="erroneous initiation">
        <sequence resource="EMBL-CDS" id="AAL06842"/>
    </conflict>
</comment>
<comment type="sequence caution" evidence="3">
    <conflict type="erroneous gene model prediction">
        <sequence resource="EMBL-CDS" id="BAB02756"/>
    </conflict>
</comment>
<evidence type="ECO:0000250" key="1"/>
<evidence type="ECO:0000256" key="2">
    <source>
        <dbReference type="SAM" id="MobiDB-lite"/>
    </source>
</evidence>
<evidence type="ECO:0000305" key="3"/>
<sequence>MTMIALNREVETQSLKKLSLKSVRRAREIFSPVHGQFPQPDPESKRIRLCHKIQVAFGGVEPASKPTRIADHNSEKTAPLKALALPGPKGSKELRKSATEKALVVGPTLPPRDLNNTGNPGKSTAILPAPGSFSERNLSTAALMERMPSRWPRPEWHAPWKNYRVLQGHLGWVRSVAFDPSNEWFCTGSADRTIKIWDVATGVLKLTLTGHIGQVRGLAVSNRHTYMFSAGDDKQVKCWDLEQNKVIRSYHGHLHGVYCLALHPTLDVVLTGGRDSVCRVWDIRTKMQIFVLPHDSDVFSVLARPTDPQVITGSHDSTIKFWDLRYGKSMATITNHKKTVRAMALHPKENDFVSASADNIKKFSLPKGEFCHNMLSLQRDIINAVAVNEDGVMVTGGDKGGLWFWDWKSGHNFQRAETIVQPGSLESEAGIYAACYDQTGSRLVTCEGDKTIKMWKEDEDATPETHPLNFKPPKEIRRF</sequence>
<name>PRL2_ARATH</name>
<accession>Q39190</accession>
<accession>Q5PNR9</accession>
<accession>Q940Q7</accession>
<accession>Q9LUR9</accession>
<keyword id="KW-1185">Reference proteome</keyword>
<keyword id="KW-0677">Repeat</keyword>
<keyword id="KW-0853">WD repeat</keyword>
<feature type="chain" id="PRO_0000051158" description="Protein pleiotropic regulator PRL2">
    <location>
        <begin position="1"/>
        <end position="479"/>
    </location>
</feature>
<feature type="repeat" description="WD 1">
    <location>
        <begin position="168"/>
        <end position="198"/>
    </location>
</feature>
<feature type="repeat" description="WD 2">
    <location>
        <begin position="210"/>
        <end position="240"/>
    </location>
</feature>
<feature type="repeat" description="WD 3">
    <location>
        <begin position="252"/>
        <end position="282"/>
    </location>
</feature>
<feature type="repeat" description="WD 4">
    <location>
        <begin position="293"/>
        <end position="323"/>
    </location>
</feature>
<feature type="repeat" description="WD 5">
    <location>
        <begin position="335"/>
        <end position="364"/>
    </location>
</feature>
<feature type="repeat" description="WD 6">
    <location>
        <begin position="377"/>
        <end position="406"/>
    </location>
</feature>
<feature type="repeat" description="WD 7">
    <location>
        <begin position="426"/>
        <end position="456"/>
    </location>
</feature>
<feature type="region of interest" description="Disordered" evidence="2">
    <location>
        <begin position="458"/>
        <end position="479"/>
    </location>
</feature>
<feature type="short sequence motif" description="DWD box 1">
    <location>
        <begin position="269"/>
        <end position="284"/>
    </location>
</feature>
<feature type="short sequence motif" description="DWD box 2">
    <location>
        <begin position="310"/>
        <end position="325"/>
    </location>
</feature>